<dbReference type="EMBL" id="AE001273">
    <property type="protein sequence ID" value="AAC68125.1"/>
    <property type="molecule type" value="Genomic_DNA"/>
</dbReference>
<dbReference type="PIR" id="B71507">
    <property type="entry name" value="B71507"/>
</dbReference>
<dbReference type="RefSeq" id="NP_220039.1">
    <property type="nucleotide sequence ID" value="NC_000117.1"/>
</dbReference>
<dbReference type="RefSeq" id="WP_009871888.1">
    <property type="nucleotide sequence ID" value="NC_000117.1"/>
</dbReference>
<dbReference type="SMR" id="P66480"/>
<dbReference type="FunCoup" id="P66480">
    <property type="interactions" value="250"/>
</dbReference>
<dbReference type="STRING" id="272561.CT_524"/>
<dbReference type="EnsemblBacteria" id="AAC68125">
    <property type="protein sequence ID" value="AAC68125"/>
    <property type="gene ID" value="CT_524"/>
</dbReference>
<dbReference type="GeneID" id="884301"/>
<dbReference type="GeneID" id="93065363"/>
<dbReference type="KEGG" id="ctr:CT_524"/>
<dbReference type="PATRIC" id="fig|272561.5.peg.568"/>
<dbReference type="HOGENOM" id="CLU_144911_0_1_0"/>
<dbReference type="InParanoid" id="P66480"/>
<dbReference type="OrthoDB" id="9797833at2"/>
<dbReference type="PRO" id="PR:P66480"/>
<dbReference type="Proteomes" id="UP000000431">
    <property type="component" value="Chromosome"/>
</dbReference>
<dbReference type="GO" id="GO:0005737">
    <property type="term" value="C:cytoplasm"/>
    <property type="evidence" value="ECO:0007669"/>
    <property type="project" value="UniProtKB-ARBA"/>
</dbReference>
<dbReference type="GO" id="GO:0015935">
    <property type="term" value="C:small ribosomal subunit"/>
    <property type="evidence" value="ECO:0007669"/>
    <property type="project" value="InterPro"/>
</dbReference>
<dbReference type="GO" id="GO:0019843">
    <property type="term" value="F:rRNA binding"/>
    <property type="evidence" value="ECO:0007669"/>
    <property type="project" value="UniProtKB-UniRule"/>
</dbReference>
<dbReference type="GO" id="GO:0003735">
    <property type="term" value="F:structural constituent of ribosome"/>
    <property type="evidence" value="ECO:0000318"/>
    <property type="project" value="GO_Central"/>
</dbReference>
<dbReference type="GO" id="GO:0000028">
    <property type="term" value="P:ribosomal small subunit assembly"/>
    <property type="evidence" value="ECO:0000318"/>
    <property type="project" value="GO_Central"/>
</dbReference>
<dbReference type="GO" id="GO:0006412">
    <property type="term" value="P:translation"/>
    <property type="evidence" value="ECO:0007669"/>
    <property type="project" value="UniProtKB-UniRule"/>
</dbReference>
<dbReference type="FunFam" id="3.30.860.10:FF:000001">
    <property type="entry name" value="30S ribosomal protein S19"/>
    <property type="match status" value="1"/>
</dbReference>
<dbReference type="Gene3D" id="3.30.860.10">
    <property type="entry name" value="30s Ribosomal Protein S19, Chain A"/>
    <property type="match status" value="1"/>
</dbReference>
<dbReference type="HAMAP" id="MF_00531">
    <property type="entry name" value="Ribosomal_uS19"/>
    <property type="match status" value="1"/>
</dbReference>
<dbReference type="InterPro" id="IPR002222">
    <property type="entry name" value="Ribosomal_uS19"/>
</dbReference>
<dbReference type="InterPro" id="IPR005732">
    <property type="entry name" value="Ribosomal_uS19_bac-type"/>
</dbReference>
<dbReference type="InterPro" id="IPR020934">
    <property type="entry name" value="Ribosomal_uS19_CS"/>
</dbReference>
<dbReference type="InterPro" id="IPR023575">
    <property type="entry name" value="Ribosomal_uS19_SF"/>
</dbReference>
<dbReference type="NCBIfam" id="TIGR01050">
    <property type="entry name" value="rpsS_bact"/>
    <property type="match status" value="1"/>
</dbReference>
<dbReference type="PANTHER" id="PTHR11880">
    <property type="entry name" value="RIBOSOMAL PROTEIN S19P FAMILY MEMBER"/>
    <property type="match status" value="1"/>
</dbReference>
<dbReference type="PANTHER" id="PTHR11880:SF8">
    <property type="entry name" value="SMALL RIBOSOMAL SUBUNIT PROTEIN US19M"/>
    <property type="match status" value="1"/>
</dbReference>
<dbReference type="Pfam" id="PF00203">
    <property type="entry name" value="Ribosomal_S19"/>
    <property type="match status" value="1"/>
</dbReference>
<dbReference type="PIRSF" id="PIRSF002144">
    <property type="entry name" value="Ribosomal_S19"/>
    <property type="match status" value="1"/>
</dbReference>
<dbReference type="PRINTS" id="PR00975">
    <property type="entry name" value="RIBOSOMALS19"/>
</dbReference>
<dbReference type="SUPFAM" id="SSF54570">
    <property type="entry name" value="Ribosomal protein S19"/>
    <property type="match status" value="1"/>
</dbReference>
<dbReference type="PROSITE" id="PS00323">
    <property type="entry name" value="RIBOSOMAL_S19"/>
    <property type="match status" value="1"/>
</dbReference>
<reference key="1">
    <citation type="journal article" date="1998" name="Science">
        <title>Genome sequence of an obligate intracellular pathogen of humans: Chlamydia trachomatis.</title>
        <authorList>
            <person name="Stephens R.S."/>
            <person name="Kalman S."/>
            <person name="Lammel C.J."/>
            <person name="Fan J."/>
            <person name="Marathe R."/>
            <person name="Aravind L."/>
            <person name="Mitchell W.P."/>
            <person name="Olinger L."/>
            <person name="Tatusov R.L."/>
            <person name="Zhao Q."/>
            <person name="Koonin E.V."/>
            <person name="Davis R.W."/>
        </authorList>
    </citation>
    <scope>NUCLEOTIDE SEQUENCE [LARGE SCALE GENOMIC DNA]</scope>
    <source>
        <strain>ATCC VR-885 / DSM 19411 / UW-3/Cx</strain>
    </source>
</reference>
<protein>
    <recommendedName>
        <fullName evidence="2">Small ribosomal subunit protein uS19</fullName>
    </recommendedName>
    <alternativeName>
        <fullName>30S ribosomal protein S19</fullName>
    </alternativeName>
</protein>
<organism>
    <name type="scientific">Chlamydia trachomatis serovar D (strain ATCC VR-885 / DSM 19411 / UW-3/Cx)</name>
    <dbReference type="NCBI Taxonomy" id="272561"/>
    <lineage>
        <taxon>Bacteria</taxon>
        <taxon>Pseudomonadati</taxon>
        <taxon>Chlamydiota</taxon>
        <taxon>Chlamydiia</taxon>
        <taxon>Chlamydiales</taxon>
        <taxon>Chlamydiaceae</taxon>
        <taxon>Chlamydia/Chlamydophila group</taxon>
        <taxon>Chlamydia</taxon>
    </lineage>
</organism>
<name>RS19_CHLTR</name>
<keyword id="KW-1185">Reference proteome</keyword>
<keyword id="KW-0687">Ribonucleoprotein</keyword>
<keyword id="KW-0689">Ribosomal protein</keyword>
<keyword id="KW-0694">RNA-binding</keyword>
<keyword id="KW-0699">rRNA-binding</keyword>
<gene>
    <name type="primary">rpsS</name>
    <name type="synonym">rs19</name>
    <name type="ordered locus">CT_524</name>
</gene>
<proteinExistence type="inferred from homology"/>
<evidence type="ECO:0000250" key="1"/>
<evidence type="ECO:0000305" key="2"/>
<comment type="function">
    <text evidence="1">Protein S19 forms a complex with S13 that binds strongly to the 16S ribosomal RNA.</text>
</comment>
<comment type="similarity">
    <text evidence="2">Belongs to the universal ribosomal protein uS19 family.</text>
</comment>
<sequence length="88" mass="10233">MSRSLRKGPFVDHHLLKKVRDMNALEKKTPIKTWSRRSMITPEMIGHTFEVHNGRKFLTVFVSETMVGHKLGEFSPTRMFKSHPVKKG</sequence>
<feature type="chain" id="PRO_0000129805" description="Small ribosomal subunit protein uS19">
    <location>
        <begin position="1"/>
        <end position="88"/>
    </location>
</feature>
<accession>P66480</accession>
<accession>O84529</accession>
<accession>Q9PJL8</accession>